<reference key="1">
    <citation type="journal article" date="2009" name="Appl. Environ. Microbiol.">
        <title>Rhizobium sp. strain NGR234 possesses a remarkable number of secretion systems.</title>
        <authorList>
            <person name="Schmeisser C."/>
            <person name="Liesegang H."/>
            <person name="Krysciak D."/>
            <person name="Bakkou N."/>
            <person name="Le Quere A."/>
            <person name="Wollherr A."/>
            <person name="Heinemeyer I."/>
            <person name="Morgenstern B."/>
            <person name="Pommerening-Roeser A."/>
            <person name="Flores M."/>
            <person name="Palacios R."/>
            <person name="Brenner S."/>
            <person name="Gottschalk G."/>
            <person name="Schmitz R.A."/>
            <person name="Broughton W.J."/>
            <person name="Perret X."/>
            <person name="Strittmatter A.W."/>
            <person name="Streit W.R."/>
        </authorList>
    </citation>
    <scope>NUCLEOTIDE SEQUENCE [LARGE SCALE GENOMIC DNA]</scope>
    <source>
        <strain>NBRC 101917 / NGR234</strain>
    </source>
</reference>
<keyword id="KW-0028">Amino-acid biosynthesis</keyword>
<keyword id="KW-0100">Branched-chain amino acid biosynthesis</keyword>
<keyword id="KW-0432">Leucine biosynthesis</keyword>
<keyword id="KW-0456">Lyase</keyword>
<keyword id="KW-1185">Reference proteome</keyword>
<sequence>MDKFVKLTGVAAPLPVVNIDTDMIIPKDYLKTIKRTGLGTGLFAEARYNEDGTPNPDFVLNKPAYQNAKILVAGDNFGCGSSREHAPWALLDFGIRCVISTSFADIFYNNCFKNGILPIVVSQADLDKLMDDANRGSNAVLSIDLEAQEITGPDGGSIKFEIDAFKRHCLLNGLDDIGLTLEKAGAIDTFEKSTAASRPWA</sequence>
<name>LEUD_SINFN</name>
<comment type="function">
    <text evidence="1">Catalyzes the isomerization between 2-isopropylmalate and 3-isopropylmalate, via the formation of 2-isopropylmaleate.</text>
</comment>
<comment type="catalytic activity">
    <reaction evidence="1">
        <text>(2R,3S)-3-isopropylmalate = (2S)-2-isopropylmalate</text>
        <dbReference type="Rhea" id="RHEA:32287"/>
        <dbReference type="ChEBI" id="CHEBI:1178"/>
        <dbReference type="ChEBI" id="CHEBI:35121"/>
        <dbReference type="EC" id="4.2.1.33"/>
    </reaction>
</comment>
<comment type="pathway">
    <text evidence="1">Amino-acid biosynthesis; L-leucine biosynthesis; L-leucine from 3-methyl-2-oxobutanoate: step 2/4.</text>
</comment>
<comment type="subunit">
    <text evidence="1">Heterodimer of LeuC and LeuD.</text>
</comment>
<comment type="similarity">
    <text evidence="1">Belongs to the LeuD family. LeuD type 1 subfamily.</text>
</comment>
<protein>
    <recommendedName>
        <fullName evidence="1">3-isopropylmalate dehydratase small subunit</fullName>
        <ecNumber evidence="1">4.2.1.33</ecNumber>
    </recommendedName>
    <alternativeName>
        <fullName evidence="1">Alpha-IPM isomerase</fullName>
        <shortName evidence="1">IPMI</shortName>
    </alternativeName>
    <alternativeName>
        <fullName evidence="1">Isopropylmalate isomerase</fullName>
    </alternativeName>
</protein>
<evidence type="ECO:0000255" key="1">
    <source>
        <dbReference type="HAMAP-Rule" id="MF_01031"/>
    </source>
</evidence>
<feature type="chain" id="PRO_1000149422" description="3-isopropylmalate dehydratase small subunit">
    <location>
        <begin position="1"/>
        <end position="201"/>
    </location>
</feature>
<organism>
    <name type="scientific">Sinorhizobium fredii (strain NBRC 101917 / NGR234)</name>
    <dbReference type="NCBI Taxonomy" id="394"/>
    <lineage>
        <taxon>Bacteria</taxon>
        <taxon>Pseudomonadati</taxon>
        <taxon>Pseudomonadota</taxon>
        <taxon>Alphaproteobacteria</taxon>
        <taxon>Hyphomicrobiales</taxon>
        <taxon>Rhizobiaceae</taxon>
        <taxon>Sinorhizobium/Ensifer group</taxon>
        <taxon>Sinorhizobium</taxon>
    </lineage>
</organism>
<accession>C3M9W6</accession>
<dbReference type="EC" id="4.2.1.33" evidence="1"/>
<dbReference type="EMBL" id="CP001389">
    <property type="protein sequence ID" value="ACP26891.1"/>
    <property type="molecule type" value="Genomic_DNA"/>
</dbReference>
<dbReference type="RefSeq" id="WP_012709642.1">
    <property type="nucleotide sequence ID" value="NC_012587.1"/>
</dbReference>
<dbReference type="RefSeq" id="YP_002827644.1">
    <property type="nucleotide sequence ID" value="NC_012587.1"/>
</dbReference>
<dbReference type="SMR" id="C3M9W6"/>
<dbReference type="STRING" id="394.NGR_c31560"/>
<dbReference type="KEGG" id="rhi:NGR_c31560"/>
<dbReference type="PATRIC" id="fig|394.7.peg.5996"/>
<dbReference type="eggNOG" id="COG0066">
    <property type="taxonomic scope" value="Bacteria"/>
</dbReference>
<dbReference type="HOGENOM" id="CLU_081378_0_3_5"/>
<dbReference type="OrthoDB" id="9777465at2"/>
<dbReference type="UniPathway" id="UPA00048">
    <property type="reaction ID" value="UER00071"/>
</dbReference>
<dbReference type="Proteomes" id="UP000001054">
    <property type="component" value="Chromosome"/>
</dbReference>
<dbReference type="GO" id="GO:0009316">
    <property type="term" value="C:3-isopropylmalate dehydratase complex"/>
    <property type="evidence" value="ECO:0007669"/>
    <property type="project" value="InterPro"/>
</dbReference>
<dbReference type="GO" id="GO:0003861">
    <property type="term" value="F:3-isopropylmalate dehydratase activity"/>
    <property type="evidence" value="ECO:0007669"/>
    <property type="project" value="UniProtKB-UniRule"/>
</dbReference>
<dbReference type="GO" id="GO:0009098">
    <property type="term" value="P:L-leucine biosynthetic process"/>
    <property type="evidence" value="ECO:0007669"/>
    <property type="project" value="UniProtKB-UniRule"/>
</dbReference>
<dbReference type="CDD" id="cd01577">
    <property type="entry name" value="IPMI_Swivel"/>
    <property type="match status" value="1"/>
</dbReference>
<dbReference type="FunFam" id="3.20.19.10:FF:000003">
    <property type="entry name" value="3-isopropylmalate dehydratase small subunit"/>
    <property type="match status" value="1"/>
</dbReference>
<dbReference type="Gene3D" id="3.20.19.10">
    <property type="entry name" value="Aconitase, domain 4"/>
    <property type="match status" value="1"/>
</dbReference>
<dbReference type="HAMAP" id="MF_01031">
    <property type="entry name" value="LeuD_type1"/>
    <property type="match status" value="1"/>
</dbReference>
<dbReference type="InterPro" id="IPR004431">
    <property type="entry name" value="3-IsopropMal_deHydase_ssu"/>
</dbReference>
<dbReference type="InterPro" id="IPR015928">
    <property type="entry name" value="Aconitase/3IPM_dehydase_swvl"/>
</dbReference>
<dbReference type="InterPro" id="IPR000573">
    <property type="entry name" value="AconitaseA/IPMdHydase_ssu_swvl"/>
</dbReference>
<dbReference type="InterPro" id="IPR033940">
    <property type="entry name" value="IPMI_Swivel"/>
</dbReference>
<dbReference type="InterPro" id="IPR050075">
    <property type="entry name" value="LeuD"/>
</dbReference>
<dbReference type="NCBIfam" id="TIGR00171">
    <property type="entry name" value="leuD"/>
    <property type="match status" value="1"/>
</dbReference>
<dbReference type="NCBIfam" id="NF002458">
    <property type="entry name" value="PRK01641.1"/>
    <property type="match status" value="1"/>
</dbReference>
<dbReference type="PANTHER" id="PTHR43345:SF5">
    <property type="entry name" value="3-ISOPROPYLMALATE DEHYDRATASE SMALL SUBUNIT"/>
    <property type="match status" value="1"/>
</dbReference>
<dbReference type="PANTHER" id="PTHR43345">
    <property type="entry name" value="3-ISOPROPYLMALATE DEHYDRATASE SMALL SUBUNIT 2-RELATED-RELATED"/>
    <property type="match status" value="1"/>
</dbReference>
<dbReference type="Pfam" id="PF00694">
    <property type="entry name" value="Aconitase_C"/>
    <property type="match status" value="1"/>
</dbReference>
<dbReference type="SUPFAM" id="SSF52016">
    <property type="entry name" value="LeuD/IlvD-like"/>
    <property type="match status" value="1"/>
</dbReference>
<gene>
    <name evidence="1" type="primary">leuD</name>
    <name type="ordered locus">NGR_c31560</name>
</gene>
<proteinExistence type="inferred from homology"/>